<reference key="1">
    <citation type="journal article" date="2003" name="Nat. Genet.">
        <title>Comparative analysis of the genome sequences of Bordetella pertussis, Bordetella parapertussis and Bordetella bronchiseptica.</title>
        <authorList>
            <person name="Parkhill J."/>
            <person name="Sebaihia M."/>
            <person name="Preston A."/>
            <person name="Murphy L.D."/>
            <person name="Thomson N.R."/>
            <person name="Harris D.E."/>
            <person name="Holden M.T.G."/>
            <person name="Churcher C.M."/>
            <person name="Bentley S.D."/>
            <person name="Mungall K.L."/>
            <person name="Cerdeno-Tarraga A.-M."/>
            <person name="Temple L."/>
            <person name="James K.D."/>
            <person name="Harris B."/>
            <person name="Quail M.A."/>
            <person name="Achtman M."/>
            <person name="Atkin R."/>
            <person name="Baker S."/>
            <person name="Basham D."/>
            <person name="Bason N."/>
            <person name="Cherevach I."/>
            <person name="Chillingworth T."/>
            <person name="Collins M."/>
            <person name="Cronin A."/>
            <person name="Davis P."/>
            <person name="Doggett J."/>
            <person name="Feltwell T."/>
            <person name="Goble A."/>
            <person name="Hamlin N."/>
            <person name="Hauser H."/>
            <person name="Holroyd S."/>
            <person name="Jagels K."/>
            <person name="Leather S."/>
            <person name="Moule S."/>
            <person name="Norberczak H."/>
            <person name="O'Neil S."/>
            <person name="Ormond D."/>
            <person name="Price C."/>
            <person name="Rabbinowitsch E."/>
            <person name="Rutter S."/>
            <person name="Sanders M."/>
            <person name="Saunders D."/>
            <person name="Seeger K."/>
            <person name="Sharp S."/>
            <person name="Simmonds M."/>
            <person name="Skelton J."/>
            <person name="Squares R."/>
            <person name="Squares S."/>
            <person name="Stevens K."/>
            <person name="Unwin L."/>
            <person name="Whitehead S."/>
            <person name="Barrell B.G."/>
            <person name="Maskell D.J."/>
        </authorList>
    </citation>
    <scope>NUCLEOTIDE SEQUENCE [LARGE SCALE GENOMIC DNA]</scope>
    <source>
        <strain>Tohama I / ATCC BAA-589 / NCTC 13251</strain>
    </source>
</reference>
<comment type="function">
    <text evidence="1">IGPS catalyzes the conversion of PRFAR and glutamine to IGP, AICAR and glutamate. The HisF subunit catalyzes the cyclization activity that produces IGP and AICAR from PRFAR using the ammonia provided by the HisH subunit.</text>
</comment>
<comment type="catalytic activity">
    <reaction evidence="1">
        <text>5-[(5-phospho-1-deoxy-D-ribulos-1-ylimino)methylamino]-1-(5-phospho-beta-D-ribosyl)imidazole-4-carboxamide + L-glutamine = D-erythro-1-(imidazol-4-yl)glycerol 3-phosphate + 5-amino-1-(5-phospho-beta-D-ribosyl)imidazole-4-carboxamide + L-glutamate + H(+)</text>
        <dbReference type="Rhea" id="RHEA:24793"/>
        <dbReference type="ChEBI" id="CHEBI:15378"/>
        <dbReference type="ChEBI" id="CHEBI:29985"/>
        <dbReference type="ChEBI" id="CHEBI:58278"/>
        <dbReference type="ChEBI" id="CHEBI:58359"/>
        <dbReference type="ChEBI" id="CHEBI:58475"/>
        <dbReference type="ChEBI" id="CHEBI:58525"/>
        <dbReference type="EC" id="4.3.2.10"/>
    </reaction>
</comment>
<comment type="pathway">
    <text evidence="1">Amino-acid biosynthesis; L-histidine biosynthesis; L-histidine from 5-phospho-alpha-D-ribose 1-diphosphate: step 5/9.</text>
</comment>
<comment type="subunit">
    <text evidence="1">Heterodimer of HisH and HisF.</text>
</comment>
<comment type="subcellular location">
    <subcellularLocation>
        <location evidence="1">Cytoplasm</location>
    </subcellularLocation>
</comment>
<comment type="similarity">
    <text evidence="1">Belongs to the HisA/HisF family.</text>
</comment>
<feature type="chain" id="PRO_0000142128" description="Imidazole glycerol phosphate synthase subunit HisF">
    <location>
        <begin position="1"/>
        <end position="269"/>
    </location>
</feature>
<feature type="active site" evidence="1">
    <location>
        <position position="23"/>
    </location>
</feature>
<feature type="active site" evidence="1">
    <location>
        <position position="142"/>
    </location>
</feature>
<sequence>MNASRIAAAGASTLTRRIIPCLDVTAGRVVKGVNFVNLTDAGDPVEIARRYNEQGADELTFLDITATSDGRDLILPIIEQVASQVFIPLTVGGGVRQVSDVQRLLNAGADKISINSAAVANPELVRAAADYHGSQCIVVAIDARRSSAEGEPARWEVFTHGGRKATGLDAVAWARRMAAYGAGEILLTSMDRDGTKSGFDLELTRAVSDAVPVPVIASGGVGNLQHLADGVTTGRASAVLAASIFHFGQHTVRECKQYMAERGIAVRLT</sequence>
<dbReference type="EC" id="4.3.2.10" evidence="1"/>
<dbReference type="EMBL" id="BX640422">
    <property type="protein sequence ID" value="CAE44029.1"/>
    <property type="molecule type" value="Genomic_DNA"/>
</dbReference>
<dbReference type="RefSeq" id="NP_882274.1">
    <property type="nucleotide sequence ID" value="NC_002929.2"/>
</dbReference>
<dbReference type="RefSeq" id="WP_003815802.1">
    <property type="nucleotide sequence ID" value="NZ_CP039022.1"/>
</dbReference>
<dbReference type="SMR" id="Q7VSY6"/>
<dbReference type="STRING" id="257313.BP3773"/>
<dbReference type="PaxDb" id="257313-BP3773"/>
<dbReference type="GeneID" id="69600000"/>
<dbReference type="KEGG" id="bpe:BP3773"/>
<dbReference type="PATRIC" id="fig|257313.5.peg.4077"/>
<dbReference type="eggNOG" id="COG0107">
    <property type="taxonomic scope" value="Bacteria"/>
</dbReference>
<dbReference type="HOGENOM" id="CLU_048577_4_0_4"/>
<dbReference type="UniPathway" id="UPA00031">
    <property type="reaction ID" value="UER00010"/>
</dbReference>
<dbReference type="Proteomes" id="UP000002676">
    <property type="component" value="Chromosome"/>
</dbReference>
<dbReference type="GO" id="GO:0005737">
    <property type="term" value="C:cytoplasm"/>
    <property type="evidence" value="ECO:0007669"/>
    <property type="project" value="UniProtKB-SubCell"/>
</dbReference>
<dbReference type="GO" id="GO:0000107">
    <property type="term" value="F:imidazoleglycerol-phosphate synthase activity"/>
    <property type="evidence" value="ECO:0007669"/>
    <property type="project" value="UniProtKB-UniRule"/>
</dbReference>
<dbReference type="GO" id="GO:0016829">
    <property type="term" value="F:lyase activity"/>
    <property type="evidence" value="ECO:0007669"/>
    <property type="project" value="UniProtKB-KW"/>
</dbReference>
<dbReference type="GO" id="GO:0000105">
    <property type="term" value="P:L-histidine biosynthetic process"/>
    <property type="evidence" value="ECO:0007669"/>
    <property type="project" value="UniProtKB-UniRule"/>
</dbReference>
<dbReference type="CDD" id="cd04731">
    <property type="entry name" value="HisF"/>
    <property type="match status" value="1"/>
</dbReference>
<dbReference type="FunFam" id="3.20.20.70:FF:000006">
    <property type="entry name" value="Imidazole glycerol phosphate synthase subunit HisF"/>
    <property type="match status" value="1"/>
</dbReference>
<dbReference type="Gene3D" id="3.20.20.70">
    <property type="entry name" value="Aldolase class I"/>
    <property type="match status" value="1"/>
</dbReference>
<dbReference type="HAMAP" id="MF_01013">
    <property type="entry name" value="HisF"/>
    <property type="match status" value="1"/>
</dbReference>
<dbReference type="InterPro" id="IPR013785">
    <property type="entry name" value="Aldolase_TIM"/>
</dbReference>
<dbReference type="InterPro" id="IPR006062">
    <property type="entry name" value="His_biosynth"/>
</dbReference>
<dbReference type="InterPro" id="IPR004651">
    <property type="entry name" value="HisF"/>
</dbReference>
<dbReference type="InterPro" id="IPR050064">
    <property type="entry name" value="IGPS_HisA/HisF"/>
</dbReference>
<dbReference type="InterPro" id="IPR011060">
    <property type="entry name" value="RibuloseP-bd_barrel"/>
</dbReference>
<dbReference type="NCBIfam" id="TIGR00735">
    <property type="entry name" value="hisF"/>
    <property type="match status" value="1"/>
</dbReference>
<dbReference type="PANTHER" id="PTHR21235:SF2">
    <property type="entry name" value="IMIDAZOLE GLYCEROL PHOSPHATE SYNTHASE HISHF"/>
    <property type="match status" value="1"/>
</dbReference>
<dbReference type="PANTHER" id="PTHR21235">
    <property type="entry name" value="IMIDAZOLE GLYCEROL PHOSPHATE SYNTHASE SUBUNIT HISF/H IGP SYNTHASE SUBUNIT HISF/H"/>
    <property type="match status" value="1"/>
</dbReference>
<dbReference type="Pfam" id="PF00977">
    <property type="entry name" value="His_biosynth"/>
    <property type="match status" value="1"/>
</dbReference>
<dbReference type="SUPFAM" id="SSF51366">
    <property type="entry name" value="Ribulose-phoshate binding barrel"/>
    <property type="match status" value="1"/>
</dbReference>
<keyword id="KW-0028">Amino-acid biosynthesis</keyword>
<keyword id="KW-0963">Cytoplasm</keyword>
<keyword id="KW-0368">Histidine biosynthesis</keyword>
<keyword id="KW-0456">Lyase</keyword>
<keyword id="KW-1185">Reference proteome</keyword>
<proteinExistence type="inferred from homology"/>
<name>HIS6_BORPE</name>
<accession>Q7VSY6</accession>
<protein>
    <recommendedName>
        <fullName evidence="1">Imidazole glycerol phosphate synthase subunit HisF</fullName>
        <ecNumber evidence="1">4.3.2.10</ecNumber>
    </recommendedName>
    <alternativeName>
        <fullName evidence="1">IGP synthase cyclase subunit</fullName>
    </alternativeName>
    <alternativeName>
        <fullName evidence="1">IGP synthase subunit HisF</fullName>
    </alternativeName>
    <alternativeName>
        <fullName evidence="1">ImGP synthase subunit HisF</fullName>
        <shortName evidence="1">IGPS subunit HisF</shortName>
    </alternativeName>
</protein>
<evidence type="ECO:0000255" key="1">
    <source>
        <dbReference type="HAMAP-Rule" id="MF_01013"/>
    </source>
</evidence>
<gene>
    <name evidence="1" type="primary">hisF</name>
    <name type="ordered locus">BP3773</name>
</gene>
<organism>
    <name type="scientific">Bordetella pertussis (strain Tohama I / ATCC BAA-589 / NCTC 13251)</name>
    <dbReference type="NCBI Taxonomy" id="257313"/>
    <lineage>
        <taxon>Bacteria</taxon>
        <taxon>Pseudomonadati</taxon>
        <taxon>Pseudomonadota</taxon>
        <taxon>Betaproteobacteria</taxon>
        <taxon>Burkholderiales</taxon>
        <taxon>Alcaligenaceae</taxon>
        <taxon>Bordetella</taxon>
    </lineage>
</organism>